<name>DEOC_AERPE</name>
<reference key="1">
    <citation type="journal article" date="1999" name="DNA Res.">
        <title>Complete genome sequence of an aerobic hyper-thermophilic crenarchaeon, Aeropyrum pernix K1.</title>
        <authorList>
            <person name="Kawarabayasi Y."/>
            <person name="Hino Y."/>
            <person name="Horikawa H."/>
            <person name="Yamazaki S."/>
            <person name="Haikawa Y."/>
            <person name="Jin-no K."/>
            <person name="Takahashi M."/>
            <person name="Sekine M."/>
            <person name="Baba S."/>
            <person name="Ankai A."/>
            <person name="Kosugi H."/>
            <person name="Hosoyama A."/>
            <person name="Fukui S."/>
            <person name="Nagai Y."/>
            <person name="Nishijima K."/>
            <person name="Nakazawa H."/>
            <person name="Takamiya M."/>
            <person name="Masuda S."/>
            <person name="Funahashi T."/>
            <person name="Tanaka T."/>
            <person name="Kudoh Y."/>
            <person name="Yamazaki J."/>
            <person name="Kushida N."/>
            <person name="Oguchi A."/>
            <person name="Aoki K."/>
            <person name="Kubota K."/>
            <person name="Nakamura Y."/>
            <person name="Nomura N."/>
            <person name="Sako Y."/>
            <person name="Kikuchi H."/>
        </authorList>
    </citation>
    <scope>NUCLEOTIDE SEQUENCE [LARGE SCALE GENOMIC DNA]</scope>
    <source>
        <strain>ATCC 700893 / DSM 11879 / JCM 9820 / NBRC 100138 / K1</strain>
    </source>
</reference>
<reference key="2">
    <citation type="journal article" date="2003" name="J. Biol. Chem.">
        <title>The first crystal structure of archaeal aldolase. Unique tetrameric structure of 2-deoxy-D-ribose-5-phosphate aldolase from the hyperthermophilic archaea Aeropyrum pernix.</title>
        <authorList>
            <person name="Sakuraba H."/>
            <person name="Tsuge H."/>
            <person name="Shimoya I."/>
            <person name="Kawakami R."/>
            <person name="Goda S."/>
            <person name="Kawarabayasi Y."/>
            <person name="Katunuma N."/>
            <person name="Ago H."/>
            <person name="Miyano M."/>
            <person name="Ohshima T."/>
        </authorList>
    </citation>
    <scope>X-RAY CRYSTALLOGRAPHY (2.0 ANGSTROMS)</scope>
    <scope>PROTEIN SEQUENCE OF 2-13</scope>
    <scope>FUNCTION</scope>
    <scope>CATALYTIC ACTIVITY</scope>
    <scope>BIOPHYSICOCHEMICAL PROPERTIES</scope>
    <scope>SUBUNIT</scope>
    <scope>BIOTECHNOLOGY</scope>
    <source>
        <strain>ATCC 700893 / DSM 11879 / JCM 9820 / NBRC 100138 / K1</strain>
    </source>
</reference>
<keyword id="KW-0002">3D-structure</keyword>
<keyword id="KW-0963">Cytoplasm</keyword>
<keyword id="KW-0903">Direct protein sequencing</keyword>
<keyword id="KW-0456">Lyase</keyword>
<keyword id="KW-1185">Reference proteome</keyword>
<keyword id="KW-0704">Schiff base</keyword>
<gene>
    <name evidence="1" type="primary">deoC</name>
    <name type="ordered locus">APE_2437.1</name>
</gene>
<organism>
    <name type="scientific">Aeropyrum pernix (strain ATCC 700893 / DSM 11879 / JCM 9820 / NBRC 100138 / K1)</name>
    <dbReference type="NCBI Taxonomy" id="272557"/>
    <lineage>
        <taxon>Archaea</taxon>
        <taxon>Thermoproteota</taxon>
        <taxon>Thermoprotei</taxon>
        <taxon>Desulfurococcales</taxon>
        <taxon>Desulfurococcaceae</taxon>
        <taxon>Aeropyrum</taxon>
    </lineage>
</organism>
<feature type="initiator methionine" description="Removed" evidence="2">
    <location>
        <position position="1"/>
    </location>
</feature>
<feature type="chain" id="PRO_0000057286" description="Deoxyribose-phosphate aldolase">
    <location>
        <begin position="2"/>
        <end position="235"/>
    </location>
</feature>
<feature type="active site" description="Proton donor/acceptor" evidence="1">
    <location>
        <position position="107"/>
    </location>
</feature>
<feature type="active site" description="Schiff-base intermediate with acetaldehyde" evidence="1">
    <location>
        <position position="167"/>
    </location>
</feature>
<feature type="active site" description="Proton donor/acceptor" evidence="1">
    <location>
        <position position="197"/>
    </location>
</feature>
<feature type="helix" evidence="4">
    <location>
        <begin position="4"/>
        <end position="14"/>
    </location>
</feature>
<feature type="helix" evidence="4">
    <location>
        <begin position="18"/>
        <end position="22"/>
    </location>
</feature>
<feature type="strand" evidence="4">
    <location>
        <begin position="25"/>
        <end position="28"/>
    </location>
</feature>
<feature type="helix" evidence="4">
    <location>
        <begin position="36"/>
        <end position="49"/>
    </location>
</feature>
<feature type="strand" evidence="4">
    <location>
        <begin position="54"/>
        <end position="56"/>
    </location>
</feature>
<feature type="helix" evidence="4">
    <location>
        <begin position="58"/>
        <end position="71"/>
    </location>
</feature>
<feature type="strand" evidence="4">
    <location>
        <begin position="75"/>
        <end position="80"/>
    </location>
</feature>
<feature type="turn" evidence="4">
    <location>
        <begin position="81"/>
        <end position="83"/>
    </location>
</feature>
<feature type="helix" evidence="4">
    <location>
        <begin position="88"/>
        <end position="101"/>
    </location>
</feature>
<feature type="strand" evidence="4">
    <location>
        <begin position="105"/>
        <end position="108"/>
    </location>
</feature>
<feature type="helix" evidence="4">
    <location>
        <begin position="112"/>
        <end position="114"/>
    </location>
</feature>
<feature type="helix" evidence="4">
    <location>
        <begin position="116"/>
        <end position="132"/>
    </location>
</feature>
<feature type="strand" evidence="4">
    <location>
        <begin position="136"/>
        <end position="140"/>
    </location>
</feature>
<feature type="helix" evidence="4">
    <location>
        <begin position="143"/>
        <end position="145"/>
    </location>
</feature>
<feature type="helix" evidence="4">
    <location>
        <begin position="148"/>
        <end position="160"/>
    </location>
</feature>
<feature type="strand" evidence="4">
    <location>
        <begin position="164"/>
        <end position="168"/>
    </location>
</feature>
<feature type="strand" evidence="4">
    <location>
        <begin position="171"/>
        <end position="173"/>
    </location>
</feature>
<feature type="helix" evidence="4">
    <location>
        <begin position="179"/>
        <end position="189"/>
    </location>
</feature>
<feature type="helix" evidence="4">
    <location>
        <begin position="190"/>
        <end position="192"/>
    </location>
</feature>
<feature type="strand" evidence="4">
    <location>
        <begin position="195"/>
        <end position="201"/>
    </location>
</feature>
<feature type="helix" evidence="4">
    <location>
        <begin position="205"/>
        <end position="213"/>
    </location>
</feature>
<feature type="strand" evidence="4">
    <location>
        <begin position="217"/>
        <end position="221"/>
    </location>
</feature>
<feature type="helix" evidence="4">
    <location>
        <begin position="224"/>
        <end position="232"/>
    </location>
</feature>
<protein>
    <recommendedName>
        <fullName evidence="1">Deoxyribose-phosphate aldolase</fullName>
        <shortName evidence="1">DERA</shortName>
        <ecNumber evidence="1">4.1.2.4</ecNumber>
    </recommendedName>
    <alternativeName>
        <fullName evidence="1">2-deoxy-D-ribose 5-phosphate aldolase</fullName>
    </alternativeName>
    <alternativeName>
        <fullName evidence="1">Phosphodeoxyriboaldolase</fullName>
        <shortName evidence="1">Deoxyriboaldolase</shortName>
    </alternativeName>
</protein>
<accession>Q9Y948</accession>
<comment type="function">
    <text evidence="1 2">Catalyzes a reversible aldol reaction between acetaldehyde and D-glyceraldehyde 3-phosphate to generate 2-deoxy-D-ribose 5-phosphate.</text>
</comment>
<comment type="catalytic activity">
    <reaction evidence="1 2">
        <text>2-deoxy-D-ribose 5-phosphate = D-glyceraldehyde 3-phosphate + acetaldehyde</text>
        <dbReference type="Rhea" id="RHEA:12821"/>
        <dbReference type="ChEBI" id="CHEBI:15343"/>
        <dbReference type="ChEBI" id="CHEBI:59776"/>
        <dbReference type="ChEBI" id="CHEBI:62877"/>
        <dbReference type="EC" id="4.1.2.4"/>
    </reaction>
</comment>
<comment type="biophysicochemical properties">
    <kinetics>
        <KM evidence="2">0.057 mM for 2-deoxy-D-ribose 5-phosphate</KM>
    </kinetics>
    <phDependence>
        <text evidence="2">Optimum pH is 6.5. Is extremely stable over a wide pH range: upon heating at 50 degrees Celsius for 60 minutes, the enzyme does not lose activity at pH 4.5-11.0.</text>
    </phDependence>
    <temperatureDependence>
        <text evidence="2">Extremely thermostable. Retains full activity upon heating at 100 degrees Celsius for 10 minutes and at 80 degrees Celsius for 60 minutes.</text>
    </temperatureDependence>
</comment>
<comment type="pathway">
    <text evidence="1">Carbohydrate degradation; 2-deoxy-D-ribose 1-phosphate degradation; D-glyceraldehyde 3-phosphate and acetaldehyde from 2-deoxy-alpha-D-ribose 1-phosphate: step 2/2.</text>
</comment>
<comment type="subunit">
    <text evidence="2">Homotetramer.</text>
</comment>
<comment type="subcellular location">
    <subcellularLocation>
        <location evidence="1">Cytoplasm</location>
    </subcellularLocation>
</comment>
<comment type="biotechnology">
    <text evidence="2">Its high stability makes the enzyme a potential candidate to be used as a synthetic catalyst in practical application.</text>
</comment>
<comment type="miscellaneous">
    <text>The enzyme is also highly resistant to organic solvents such as ethanol, methanol, N,N-dimethylformamide, and Me(2)SO at 50 degrees Celsius. Loss of activity is not observed in the presence of these reagents even at a concentration as high as 40%.</text>
</comment>
<comment type="similarity">
    <text evidence="1 3">Belongs to the DeoC/FbaB aldolase family. DeoC type 1 subfamily.</text>
</comment>
<proteinExistence type="evidence at protein level"/>
<sequence>MPSARDILQQGLDRLGSPEDLASRIDSTLLSPRATEEDVRNLVREASDYGFRCAVLTPVYTVKISGLAEKLGVKLCSVIGFPLGQAPLEVKLVEAQTVLEAGATELDVVPHLSLGPEAVYREVSGIVKLAKSYGAVVKVILEAPLWDDKTLSLLVDSSRRAGADIVKTSTGVYTKGGDPVTVFRLASLAKPLGMGVKASGGIRSGIDAVLAVGAGADIIGTSSAVKVLESFKSLV</sequence>
<evidence type="ECO:0000255" key="1">
    <source>
        <dbReference type="HAMAP-Rule" id="MF_00114"/>
    </source>
</evidence>
<evidence type="ECO:0000269" key="2">
    <source>
    </source>
</evidence>
<evidence type="ECO:0000305" key="3"/>
<evidence type="ECO:0007829" key="4">
    <source>
        <dbReference type="PDB" id="1N7K"/>
    </source>
</evidence>
<dbReference type="EC" id="4.1.2.4" evidence="1"/>
<dbReference type="EMBL" id="BA000002">
    <property type="protein sequence ID" value="BAA81452.2"/>
    <property type="molecule type" value="Genomic_DNA"/>
</dbReference>
<dbReference type="PIR" id="D72474">
    <property type="entry name" value="D72474"/>
</dbReference>
<dbReference type="RefSeq" id="WP_010867005.1">
    <property type="nucleotide sequence ID" value="NC_000854.2"/>
</dbReference>
<dbReference type="PDB" id="1N7K">
    <property type="method" value="X-ray"/>
    <property type="resolution" value="2.00 A"/>
    <property type="chains" value="A/B=2-235"/>
</dbReference>
<dbReference type="PDBsum" id="1N7K"/>
<dbReference type="SMR" id="Q9Y948"/>
<dbReference type="STRING" id="272557.APE_2437.1"/>
<dbReference type="EnsemblBacteria" id="BAA81452">
    <property type="protein sequence ID" value="BAA81452"/>
    <property type="gene ID" value="APE_2437.1"/>
</dbReference>
<dbReference type="GeneID" id="1445418"/>
<dbReference type="KEGG" id="ape:APE_2437.1"/>
<dbReference type="PATRIC" id="fig|272557.25.peg.1618"/>
<dbReference type="eggNOG" id="arCOG04320">
    <property type="taxonomic scope" value="Archaea"/>
</dbReference>
<dbReference type="BRENDA" id="4.1.2.4">
    <property type="organism ID" value="171"/>
</dbReference>
<dbReference type="UniPathway" id="UPA00002">
    <property type="reaction ID" value="UER00468"/>
</dbReference>
<dbReference type="EvolutionaryTrace" id="Q9Y948"/>
<dbReference type="Proteomes" id="UP000002518">
    <property type="component" value="Chromosome"/>
</dbReference>
<dbReference type="GO" id="GO:0005737">
    <property type="term" value="C:cytoplasm"/>
    <property type="evidence" value="ECO:0007669"/>
    <property type="project" value="UniProtKB-SubCell"/>
</dbReference>
<dbReference type="GO" id="GO:0004139">
    <property type="term" value="F:deoxyribose-phosphate aldolase activity"/>
    <property type="evidence" value="ECO:0000314"/>
    <property type="project" value="UniProtKB"/>
</dbReference>
<dbReference type="GO" id="GO:0006018">
    <property type="term" value="P:2-deoxyribose 1-phosphate catabolic process"/>
    <property type="evidence" value="ECO:0007669"/>
    <property type="project" value="UniProtKB-UniRule"/>
</dbReference>
<dbReference type="GO" id="GO:0016052">
    <property type="term" value="P:carbohydrate catabolic process"/>
    <property type="evidence" value="ECO:0007669"/>
    <property type="project" value="TreeGrafter"/>
</dbReference>
<dbReference type="GO" id="GO:0005975">
    <property type="term" value="P:carbohydrate metabolic process"/>
    <property type="evidence" value="ECO:0000314"/>
    <property type="project" value="UniProtKB"/>
</dbReference>
<dbReference type="GO" id="GO:0009264">
    <property type="term" value="P:deoxyribonucleotide catabolic process"/>
    <property type="evidence" value="ECO:0007669"/>
    <property type="project" value="InterPro"/>
</dbReference>
<dbReference type="GO" id="GO:0051262">
    <property type="term" value="P:protein tetramerization"/>
    <property type="evidence" value="ECO:0000314"/>
    <property type="project" value="UniProtKB"/>
</dbReference>
<dbReference type="CDD" id="cd00959">
    <property type="entry name" value="DeoC"/>
    <property type="match status" value="1"/>
</dbReference>
<dbReference type="FunFam" id="3.20.20.70:FF:000044">
    <property type="entry name" value="Deoxyribose-phosphate aldolase"/>
    <property type="match status" value="1"/>
</dbReference>
<dbReference type="Gene3D" id="3.20.20.70">
    <property type="entry name" value="Aldolase class I"/>
    <property type="match status" value="1"/>
</dbReference>
<dbReference type="HAMAP" id="MF_00114">
    <property type="entry name" value="DeoC_type1"/>
    <property type="match status" value="1"/>
</dbReference>
<dbReference type="InterPro" id="IPR013785">
    <property type="entry name" value="Aldolase_TIM"/>
</dbReference>
<dbReference type="InterPro" id="IPR011343">
    <property type="entry name" value="DeoC"/>
</dbReference>
<dbReference type="InterPro" id="IPR002915">
    <property type="entry name" value="DeoC/FbaB/LacD_aldolase"/>
</dbReference>
<dbReference type="InterPro" id="IPR028581">
    <property type="entry name" value="DeoC_typeI"/>
</dbReference>
<dbReference type="NCBIfam" id="TIGR00126">
    <property type="entry name" value="deoC"/>
    <property type="match status" value="1"/>
</dbReference>
<dbReference type="PANTHER" id="PTHR10889">
    <property type="entry name" value="DEOXYRIBOSE-PHOSPHATE ALDOLASE"/>
    <property type="match status" value="1"/>
</dbReference>
<dbReference type="PANTHER" id="PTHR10889:SF1">
    <property type="entry name" value="DEOXYRIBOSE-PHOSPHATE ALDOLASE"/>
    <property type="match status" value="1"/>
</dbReference>
<dbReference type="Pfam" id="PF01791">
    <property type="entry name" value="DeoC"/>
    <property type="match status" value="1"/>
</dbReference>
<dbReference type="PIRSF" id="PIRSF001357">
    <property type="entry name" value="DeoC"/>
    <property type="match status" value="1"/>
</dbReference>
<dbReference type="SMART" id="SM01133">
    <property type="entry name" value="DeoC"/>
    <property type="match status" value="1"/>
</dbReference>
<dbReference type="SUPFAM" id="SSF51569">
    <property type="entry name" value="Aldolase"/>
    <property type="match status" value="1"/>
</dbReference>